<feature type="chain" id="PRO_0000229621" description="NAD kinase">
    <location>
        <begin position="1"/>
        <end position="286"/>
    </location>
</feature>
<feature type="active site" description="Proton acceptor" evidence="1">
    <location>
        <position position="74"/>
    </location>
</feature>
<feature type="binding site" evidence="1">
    <location>
        <begin position="74"/>
        <end position="75"/>
    </location>
    <ligand>
        <name>NAD(+)</name>
        <dbReference type="ChEBI" id="CHEBI:57540"/>
    </ligand>
</feature>
<feature type="binding site" evidence="1">
    <location>
        <begin position="148"/>
        <end position="149"/>
    </location>
    <ligand>
        <name>NAD(+)</name>
        <dbReference type="ChEBI" id="CHEBI:57540"/>
    </ligand>
</feature>
<feature type="binding site" evidence="1">
    <location>
        <position position="178"/>
    </location>
    <ligand>
        <name>NAD(+)</name>
        <dbReference type="ChEBI" id="CHEBI:57540"/>
    </ligand>
</feature>
<feature type="binding site" evidence="1">
    <location>
        <position position="186"/>
    </location>
    <ligand>
        <name>NAD(+)</name>
        <dbReference type="ChEBI" id="CHEBI:57540"/>
    </ligand>
</feature>
<feature type="binding site" evidence="1">
    <location>
        <begin position="189"/>
        <end position="194"/>
    </location>
    <ligand>
        <name>NAD(+)</name>
        <dbReference type="ChEBI" id="CHEBI:57540"/>
    </ligand>
</feature>
<feature type="binding site" evidence="1">
    <location>
        <position position="244"/>
    </location>
    <ligand>
        <name>NAD(+)</name>
        <dbReference type="ChEBI" id="CHEBI:57540"/>
    </ligand>
</feature>
<name>NADK_CAMJR</name>
<protein>
    <recommendedName>
        <fullName evidence="1">NAD kinase</fullName>
        <ecNumber evidence="1">2.7.1.23</ecNumber>
    </recommendedName>
    <alternativeName>
        <fullName evidence="1">ATP-dependent NAD kinase</fullName>
    </alternativeName>
</protein>
<accession>Q5HVD0</accession>
<sequence length="286" mass="32322">MQNKIDYKNIKKIGLVTRPNVSLDKEILKLQSILSIYKVELVLLKESSEILDLPKYGLDDLFKISDFVISLGGDGTLISLCRKACEYDKAVLGIHAGHLGFLTDFKVDEAENFFQAFFQGEFRIEKPYLLSVFLEDKQGKILEKLAFNDVVISKNNQASMAHIEVFRKEKKFNEYFGDGLIVATPAGSTAYNLSANGPIVYTLAQAFILTPVCSHSLTQRPIVLPKGFEIEIMAKDCILCIDGQENYKMNDFKSIKVGLSDKNVALIHPKNRDYFQILKEKLHWGN</sequence>
<organism>
    <name type="scientific">Campylobacter jejuni (strain RM1221)</name>
    <dbReference type="NCBI Taxonomy" id="195099"/>
    <lineage>
        <taxon>Bacteria</taxon>
        <taxon>Pseudomonadati</taxon>
        <taxon>Campylobacterota</taxon>
        <taxon>Epsilonproteobacteria</taxon>
        <taxon>Campylobacterales</taxon>
        <taxon>Campylobacteraceae</taxon>
        <taxon>Campylobacter</taxon>
    </lineage>
</organism>
<dbReference type="EC" id="2.7.1.23" evidence="1"/>
<dbReference type="EMBL" id="CP000025">
    <property type="protein sequence ID" value="AAW34537.1"/>
    <property type="molecule type" value="Genomic_DNA"/>
</dbReference>
<dbReference type="RefSeq" id="WP_002852365.1">
    <property type="nucleotide sequence ID" value="NC_003912.7"/>
</dbReference>
<dbReference type="SMR" id="Q5HVD0"/>
<dbReference type="KEGG" id="cjr:CJE0744"/>
<dbReference type="HOGENOM" id="CLU_008831_0_3_7"/>
<dbReference type="GO" id="GO:0005737">
    <property type="term" value="C:cytoplasm"/>
    <property type="evidence" value="ECO:0007669"/>
    <property type="project" value="UniProtKB-SubCell"/>
</dbReference>
<dbReference type="GO" id="GO:0005524">
    <property type="term" value="F:ATP binding"/>
    <property type="evidence" value="ECO:0007669"/>
    <property type="project" value="UniProtKB-KW"/>
</dbReference>
<dbReference type="GO" id="GO:0046872">
    <property type="term" value="F:metal ion binding"/>
    <property type="evidence" value="ECO:0007669"/>
    <property type="project" value="UniProtKB-UniRule"/>
</dbReference>
<dbReference type="GO" id="GO:0051287">
    <property type="term" value="F:NAD binding"/>
    <property type="evidence" value="ECO:0007669"/>
    <property type="project" value="UniProtKB-ARBA"/>
</dbReference>
<dbReference type="GO" id="GO:0003951">
    <property type="term" value="F:NAD+ kinase activity"/>
    <property type="evidence" value="ECO:0007669"/>
    <property type="project" value="UniProtKB-UniRule"/>
</dbReference>
<dbReference type="GO" id="GO:0019674">
    <property type="term" value="P:NAD metabolic process"/>
    <property type="evidence" value="ECO:0007669"/>
    <property type="project" value="InterPro"/>
</dbReference>
<dbReference type="GO" id="GO:0006741">
    <property type="term" value="P:NADP biosynthetic process"/>
    <property type="evidence" value="ECO:0007669"/>
    <property type="project" value="UniProtKB-UniRule"/>
</dbReference>
<dbReference type="Gene3D" id="3.40.50.10330">
    <property type="entry name" value="Probable inorganic polyphosphate/atp-NAD kinase, domain 1"/>
    <property type="match status" value="1"/>
</dbReference>
<dbReference type="Gene3D" id="2.60.200.30">
    <property type="entry name" value="Probable inorganic polyphosphate/atp-NAD kinase, domain 2"/>
    <property type="match status" value="1"/>
</dbReference>
<dbReference type="HAMAP" id="MF_00361">
    <property type="entry name" value="NAD_kinase"/>
    <property type="match status" value="1"/>
</dbReference>
<dbReference type="InterPro" id="IPR017438">
    <property type="entry name" value="ATP-NAD_kinase_N"/>
</dbReference>
<dbReference type="InterPro" id="IPR017437">
    <property type="entry name" value="ATP-NAD_kinase_PpnK-typ_C"/>
</dbReference>
<dbReference type="InterPro" id="IPR016064">
    <property type="entry name" value="NAD/diacylglycerol_kinase_sf"/>
</dbReference>
<dbReference type="InterPro" id="IPR002504">
    <property type="entry name" value="NADK"/>
</dbReference>
<dbReference type="NCBIfam" id="NF010679">
    <property type="entry name" value="PRK14077.1"/>
    <property type="match status" value="1"/>
</dbReference>
<dbReference type="PANTHER" id="PTHR20275">
    <property type="entry name" value="NAD KINASE"/>
    <property type="match status" value="1"/>
</dbReference>
<dbReference type="PANTHER" id="PTHR20275:SF0">
    <property type="entry name" value="NAD KINASE"/>
    <property type="match status" value="1"/>
</dbReference>
<dbReference type="Pfam" id="PF01513">
    <property type="entry name" value="NAD_kinase"/>
    <property type="match status" value="1"/>
</dbReference>
<dbReference type="Pfam" id="PF20143">
    <property type="entry name" value="NAD_kinase_C"/>
    <property type="match status" value="1"/>
</dbReference>
<dbReference type="SUPFAM" id="SSF111331">
    <property type="entry name" value="NAD kinase/diacylglycerol kinase-like"/>
    <property type="match status" value="1"/>
</dbReference>
<reference key="1">
    <citation type="journal article" date="2005" name="PLoS Biol.">
        <title>Major structural differences and novel potential virulence mechanisms from the genomes of multiple Campylobacter species.</title>
        <authorList>
            <person name="Fouts D.E."/>
            <person name="Mongodin E.F."/>
            <person name="Mandrell R.E."/>
            <person name="Miller W.G."/>
            <person name="Rasko D.A."/>
            <person name="Ravel J."/>
            <person name="Brinkac L.M."/>
            <person name="DeBoy R.T."/>
            <person name="Parker C.T."/>
            <person name="Daugherty S.C."/>
            <person name="Dodson R.J."/>
            <person name="Durkin A.S."/>
            <person name="Madupu R."/>
            <person name="Sullivan S.A."/>
            <person name="Shetty J.U."/>
            <person name="Ayodeji M.A."/>
            <person name="Shvartsbeyn A."/>
            <person name="Schatz M.C."/>
            <person name="Badger J.H."/>
            <person name="Fraser C.M."/>
            <person name="Nelson K.E."/>
        </authorList>
    </citation>
    <scope>NUCLEOTIDE SEQUENCE [LARGE SCALE GENOMIC DNA]</scope>
    <source>
        <strain>RM1221</strain>
    </source>
</reference>
<proteinExistence type="inferred from homology"/>
<evidence type="ECO:0000255" key="1">
    <source>
        <dbReference type="HAMAP-Rule" id="MF_00361"/>
    </source>
</evidence>
<keyword id="KW-0067">ATP-binding</keyword>
<keyword id="KW-0963">Cytoplasm</keyword>
<keyword id="KW-0418">Kinase</keyword>
<keyword id="KW-0520">NAD</keyword>
<keyword id="KW-0521">NADP</keyword>
<keyword id="KW-0547">Nucleotide-binding</keyword>
<keyword id="KW-0808">Transferase</keyword>
<gene>
    <name evidence="1" type="primary">nadK</name>
    <name type="ordered locus">CJE0744</name>
</gene>
<comment type="function">
    <text evidence="1">Involved in the regulation of the intracellular balance of NAD and NADP, and is a key enzyme in the biosynthesis of NADP. Catalyzes specifically the phosphorylation on 2'-hydroxyl of the adenosine moiety of NAD to yield NADP.</text>
</comment>
<comment type="catalytic activity">
    <reaction evidence="1">
        <text>NAD(+) + ATP = ADP + NADP(+) + H(+)</text>
        <dbReference type="Rhea" id="RHEA:18629"/>
        <dbReference type="ChEBI" id="CHEBI:15378"/>
        <dbReference type="ChEBI" id="CHEBI:30616"/>
        <dbReference type="ChEBI" id="CHEBI:57540"/>
        <dbReference type="ChEBI" id="CHEBI:58349"/>
        <dbReference type="ChEBI" id="CHEBI:456216"/>
        <dbReference type="EC" id="2.7.1.23"/>
    </reaction>
</comment>
<comment type="cofactor">
    <cofactor evidence="1">
        <name>a divalent metal cation</name>
        <dbReference type="ChEBI" id="CHEBI:60240"/>
    </cofactor>
</comment>
<comment type="subcellular location">
    <subcellularLocation>
        <location evidence="1">Cytoplasm</location>
    </subcellularLocation>
</comment>
<comment type="similarity">
    <text evidence="1">Belongs to the NAD kinase family.</text>
</comment>